<dbReference type="EC" id="2.1.1.173" evidence="1"/>
<dbReference type="EC" id="2.1.1.264" evidence="1"/>
<dbReference type="EMBL" id="AE004091">
    <property type="protein sequence ID" value="AAG06436.1"/>
    <property type="molecule type" value="Genomic_DNA"/>
</dbReference>
<dbReference type="PIR" id="A83266">
    <property type="entry name" value="A83266"/>
</dbReference>
<dbReference type="RefSeq" id="NP_251738.1">
    <property type="nucleotide sequence ID" value="NC_002516.2"/>
</dbReference>
<dbReference type="SMR" id="Q9HZG0"/>
<dbReference type="FunCoup" id="Q9HZG0">
    <property type="interactions" value="351"/>
</dbReference>
<dbReference type="STRING" id="208964.PA3048"/>
<dbReference type="PaxDb" id="208964-PA3048"/>
<dbReference type="GeneID" id="882879"/>
<dbReference type="KEGG" id="pae:PA3048"/>
<dbReference type="PATRIC" id="fig|208964.12.peg.3198"/>
<dbReference type="PseudoCAP" id="PA3048"/>
<dbReference type="HOGENOM" id="CLU_014042_2_0_6"/>
<dbReference type="InParanoid" id="Q9HZG0"/>
<dbReference type="OrthoDB" id="9809404at2"/>
<dbReference type="PhylomeDB" id="Q9HZG0"/>
<dbReference type="BioCyc" id="PAER208964:G1FZ6-3101-MONOMER"/>
<dbReference type="Proteomes" id="UP000002438">
    <property type="component" value="Chromosome"/>
</dbReference>
<dbReference type="GO" id="GO:0005737">
    <property type="term" value="C:cytoplasm"/>
    <property type="evidence" value="ECO:0007669"/>
    <property type="project" value="UniProtKB-SubCell"/>
</dbReference>
<dbReference type="GO" id="GO:0052915">
    <property type="term" value="F:23S rRNA (guanine(2445)-N(2))-methyltransferase activity"/>
    <property type="evidence" value="ECO:0007669"/>
    <property type="project" value="UniProtKB-UniRule"/>
</dbReference>
<dbReference type="GO" id="GO:0003723">
    <property type="term" value="F:RNA binding"/>
    <property type="evidence" value="ECO:0007669"/>
    <property type="project" value="UniProtKB-KW"/>
</dbReference>
<dbReference type="GO" id="GO:0008990">
    <property type="term" value="F:rRNA (guanine-N2-)-methyltransferase activity"/>
    <property type="evidence" value="ECO:0000318"/>
    <property type="project" value="GO_Central"/>
</dbReference>
<dbReference type="GO" id="GO:0070043">
    <property type="term" value="F:rRNA (guanine-N7-)-methyltransferase activity"/>
    <property type="evidence" value="ECO:0000318"/>
    <property type="project" value="GO_Central"/>
</dbReference>
<dbReference type="CDD" id="cd02440">
    <property type="entry name" value="AdoMet_MTases"/>
    <property type="match status" value="1"/>
</dbReference>
<dbReference type="CDD" id="cd11715">
    <property type="entry name" value="THUMP_AdoMetMT"/>
    <property type="match status" value="1"/>
</dbReference>
<dbReference type="Gene3D" id="3.30.2130.30">
    <property type="match status" value="1"/>
</dbReference>
<dbReference type="Gene3D" id="3.30.750.80">
    <property type="entry name" value="RNA methyltransferase domain (HRMD) like"/>
    <property type="match status" value="1"/>
</dbReference>
<dbReference type="Gene3D" id="3.40.50.150">
    <property type="entry name" value="Vaccinia Virus protein VP39"/>
    <property type="match status" value="2"/>
</dbReference>
<dbReference type="HAMAP" id="MF_01858">
    <property type="entry name" value="23SrRNA_methyltr_KL"/>
    <property type="match status" value="1"/>
</dbReference>
<dbReference type="InterPro" id="IPR017244">
    <property type="entry name" value="23SrRNA_methyltr_KL"/>
</dbReference>
<dbReference type="InterPro" id="IPR002052">
    <property type="entry name" value="DNA_methylase_N6_adenine_CS"/>
</dbReference>
<dbReference type="InterPro" id="IPR000241">
    <property type="entry name" value="RlmKL-like_Mtase"/>
</dbReference>
<dbReference type="InterPro" id="IPR054170">
    <property type="entry name" value="RlmL_1st"/>
</dbReference>
<dbReference type="InterPro" id="IPR019614">
    <property type="entry name" value="SAM-dep_methyl-trfase"/>
</dbReference>
<dbReference type="InterPro" id="IPR029063">
    <property type="entry name" value="SAM-dependent_MTases_sf"/>
</dbReference>
<dbReference type="InterPro" id="IPR004114">
    <property type="entry name" value="THUMP_dom"/>
</dbReference>
<dbReference type="NCBIfam" id="NF008748">
    <property type="entry name" value="PRK11783.1"/>
    <property type="match status" value="1"/>
</dbReference>
<dbReference type="PANTHER" id="PTHR47313">
    <property type="entry name" value="RIBOSOMAL RNA LARGE SUBUNIT METHYLTRANSFERASE K/L"/>
    <property type="match status" value="1"/>
</dbReference>
<dbReference type="PANTHER" id="PTHR47313:SF1">
    <property type="entry name" value="RIBOSOMAL RNA LARGE SUBUNIT METHYLTRANSFERASE K_L"/>
    <property type="match status" value="1"/>
</dbReference>
<dbReference type="Pfam" id="PF10672">
    <property type="entry name" value="Methyltrans_SAM"/>
    <property type="match status" value="1"/>
</dbReference>
<dbReference type="Pfam" id="PF22020">
    <property type="entry name" value="RlmL_1st"/>
    <property type="match status" value="1"/>
</dbReference>
<dbReference type="Pfam" id="PF02926">
    <property type="entry name" value="THUMP"/>
    <property type="match status" value="1"/>
</dbReference>
<dbReference type="Pfam" id="PF01170">
    <property type="entry name" value="UPF0020"/>
    <property type="match status" value="1"/>
</dbReference>
<dbReference type="PIRSF" id="PIRSF037618">
    <property type="entry name" value="RNA_Mtase_bacteria_prd"/>
    <property type="match status" value="1"/>
</dbReference>
<dbReference type="SMART" id="SM00981">
    <property type="entry name" value="THUMP"/>
    <property type="match status" value="1"/>
</dbReference>
<dbReference type="SUPFAM" id="SSF53335">
    <property type="entry name" value="S-adenosyl-L-methionine-dependent methyltransferases"/>
    <property type="match status" value="2"/>
</dbReference>
<dbReference type="PROSITE" id="PS51165">
    <property type="entry name" value="THUMP"/>
    <property type="match status" value="1"/>
</dbReference>
<keyword id="KW-0963">Cytoplasm</keyword>
<keyword id="KW-0489">Methyltransferase</keyword>
<keyword id="KW-1185">Reference proteome</keyword>
<keyword id="KW-0694">RNA-binding</keyword>
<keyword id="KW-0698">rRNA processing</keyword>
<keyword id="KW-0949">S-adenosyl-L-methionine</keyword>
<keyword id="KW-0808">Transferase</keyword>
<protein>
    <recommendedName>
        <fullName evidence="1">Ribosomal RNA large subunit methyltransferase K/L</fullName>
    </recommendedName>
    <domain>
        <recommendedName>
            <fullName evidence="1">23S rRNA m2G2445 methyltransferase</fullName>
            <ecNumber evidence="1">2.1.1.173</ecNumber>
        </recommendedName>
        <alternativeName>
            <fullName evidence="1">rRNA (guanine-N(2)-)-methyltransferase RlmL</fullName>
        </alternativeName>
    </domain>
    <domain>
        <recommendedName>
            <fullName evidence="1">23S rRNA m7G2069 methyltransferase</fullName>
            <ecNumber evidence="1">2.1.1.264</ecNumber>
        </recommendedName>
        <alternativeName>
            <fullName evidence="1">rRNA (guanine-N(7)-)-methyltransferase RlmK</fullName>
        </alternativeName>
    </domain>
</protein>
<gene>
    <name evidence="1" type="primary">rlmL</name>
    <name type="ordered locus">PA3048</name>
</gene>
<feature type="chain" id="PRO_0000366785" description="Ribosomal RNA large subunit methyltransferase K/L">
    <location>
        <begin position="1"/>
        <end position="725"/>
    </location>
</feature>
<feature type="domain" description="THUMP" evidence="1">
    <location>
        <begin position="46"/>
        <end position="157"/>
    </location>
</feature>
<name>RLMKL_PSEAE</name>
<accession>Q9HZG0</accession>
<proteinExistence type="inferred from homology"/>
<organism>
    <name type="scientific">Pseudomonas aeruginosa (strain ATCC 15692 / DSM 22644 / CIP 104116 / JCM 14847 / LMG 12228 / 1C / PRS 101 / PAO1)</name>
    <dbReference type="NCBI Taxonomy" id="208964"/>
    <lineage>
        <taxon>Bacteria</taxon>
        <taxon>Pseudomonadati</taxon>
        <taxon>Pseudomonadota</taxon>
        <taxon>Gammaproteobacteria</taxon>
        <taxon>Pseudomonadales</taxon>
        <taxon>Pseudomonadaceae</taxon>
        <taxon>Pseudomonas</taxon>
    </lineage>
</organism>
<sequence>MADVYELFLTCPKGLESLLLEEAQGLGLDEARAQVSAVRGQGSLEVAYRLCLWSRLANRVLLVLARFPVENAESMYMAVHAVNWEDHLDAGGTLAVEFSGKGSGIDNTHFGALKVKDAIVDNLRERSGRRPSVDKVNPDVRVHLHLDRGQATLSLDLSGHSLHQRGYRLQQGAAPLKENLAAAVLIRAGWPKIAAEGGALADPMCGVGTFLVEAALMAADIAPNLKRERWGFSSWLGHVPALWRKLHEEAQQRAAAGLARPPLWIRGYEADPRLIQPACNNIERAGVADWVKIYQGELATFEPRPDKGQTGLVICNPPYGERLGDEASLLYLYQNLGERLRQSCIGWSAGVFTGAPELGKRMGIRSHKQYAFWNGALACKLLMIQVEPRQFVTGERGERNDEGLARAPSEPARLSEGGQMFANRLQKNLRQLGKWARRDKIECYRLYDADMPEYALAVDIYGDWVHVQEYAAPKSIDPAKAQARLFDALAAIPQTLGVAQERVVVKRRERQAGKKQYERQSSEGKFLEVGEGDVRLLVNLTDYLDTGLFLDHRPMRLRIQKEAAGKRFLNLFCYTATATVHAARGGARSTTSVDLSKTYLDWARRNLSLNGFSDKQRLVHGDVMEWLREDDGQYELIFIDPPTFSNSKRMEGVFDVQRDHVELLDLAMARLAPGGVLYFSNNFRKFELDESVQARYAVEEITGETLDPDFARNPKIHRAWRITVR</sequence>
<reference key="1">
    <citation type="journal article" date="2000" name="Nature">
        <title>Complete genome sequence of Pseudomonas aeruginosa PAO1, an opportunistic pathogen.</title>
        <authorList>
            <person name="Stover C.K."/>
            <person name="Pham X.-Q.T."/>
            <person name="Erwin A.L."/>
            <person name="Mizoguchi S.D."/>
            <person name="Warrener P."/>
            <person name="Hickey M.J."/>
            <person name="Brinkman F.S.L."/>
            <person name="Hufnagle W.O."/>
            <person name="Kowalik D.J."/>
            <person name="Lagrou M."/>
            <person name="Garber R.L."/>
            <person name="Goltry L."/>
            <person name="Tolentino E."/>
            <person name="Westbrock-Wadman S."/>
            <person name="Yuan Y."/>
            <person name="Brody L.L."/>
            <person name="Coulter S.N."/>
            <person name="Folger K.R."/>
            <person name="Kas A."/>
            <person name="Larbig K."/>
            <person name="Lim R.M."/>
            <person name="Smith K.A."/>
            <person name="Spencer D.H."/>
            <person name="Wong G.K.-S."/>
            <person name="Wu Z."/>
            <person name="Paulsen I.T."/>
            <person name="Reizer J."/>
            <person name="Saier M.H. Jr."/>
            <person name="Hancock R.E.W."/>
            <person name="Lory S."/>
            <person name="Olson M.V."/>
        </authorList>
    </citation>
    <scope>NUCLEOTIDE SEQUENCE [LARGE SCALE GENOMIC DNA]</scope>
    <source>
        <strain>ATCC 15692 / DSM 22644 / CIP 104116 / JCM 14847 / LMG 12228 / 1C / PRS 101 / PAO1</strain>
    </source>
</reference>
<evidence type="ECO:0000255" key="1">
    <source>
        <dbReference type="HAMAP-Rule" id="MF_01858"/>
    </source>
</evidence>
<comment type="function">
    <text evidence="1">Specifically methylates the guanine in position 2445 (m2G2445) and the guanine in position 2069 (m7G2069) of 23S rRNA.</text>
</comment>
<comment type="catalytic activity">
    <reaction evidence="1">
        <text>guanosine(2445) in 23S rRNA + S-adenosyl-L-methionine = N(2)-methylguanosine(2445) in 23S rRNA + S-adenosyl-L-homocysteine + H(+)</text>
        <dbReference type="Rhea" id="RHEA:42740"/>
        <dbReference type="Rhea" id="RHEA-COMP:10215"/>
        <dbReference type="Rhea" id="RHEA-COMP:10216"/>
        <dbReference type="ChEBI" id="CHEBI:15378"/>
        <dbReference type="ChEBI" id="CHEBI:57856"/>
        <dbReference type="ChEBI" id="CHEBI:59789"/>
        <dbReference type="ChEBI" id="CHEBI:74269"/>
        <dbReference type="ChEBI" id="CHEBI:74481"/>
        <dbReference type="EC" id="2.1.1.173"/>
    </reaction>
</comment>
<comment type="catalytic activity">
    <reaction evidence="1">
        <text>guanosine(2069) in 23S rRNA + S-adenosyl-L-methionine = N(2)-methylguanosine(2069) in 23S rRNA + S-adenosyl-L-homocysteine + H(+)</text>
        <dbReference type="Rhea" id="RHEA:43772"/>
        <dbReference type="Rhea" id="RHEA-COMP:10688"/>
        <dbReference type="Rhea" id="RHEA-COMP:10689"/>
        <dbReference type="ChEBI" id="CHEBI:15378"/>
        <dbReference type="ChEBI" id="CHEBI:57856"/>
        <dbReference type="ChEBI" id="CHEBI:59789"/>
        <dbReference type="ChEBI" id="CHEBI:74269"/>
        <dbReference type="ChEBI" id="CHEBI:74481"/>
        <dbReference type="EC" id="2.1.1.264"/>
    </reaction>
</comment>
<comment type="subcellular location">
    <subcellularLocation>
        <location evidence="1">Cytoplasm</location>
    </subcellularLocation>
</comment>
<comment type="similarity">
    <text evidence="1">Belongs to the methyltransferase superfamily. RlmKL family.</text>
</comment>